<gene>
    <name evidence="6" type="primary">sctL</name>
    <name evidence="5" type="synonym">yscL</name>
</gene>
<dbReference type="EMBL" id="M74011">
    <property type="protein sequence ID" value="AAC37029.1"/>
    <property type="molecule type" value="Genomic_DNA"/>
</dbReference>
<dbReference type="EMBL" id="M74011">
    <property type="protein sequence ID" value="AAC37030.1"/>
    <property type="status" value="ALT_INIT"/>
    <property type="molecule type" value="Genomic_DNA"/>
</dbReference>
<dbReference type="EMBL" id="M74011">
    <property type="protein sequence ID" value="AAC37031.1"/>
    <property type="status" value="ALT_INIT"/>
    <property type="molecule type" value="Genomic_DNA"/>
</dbReference>
<dbReference type="PIR" id="C40049">
    <property type="entry name" value="C40049"/>
</dbReference>
<dbReference type="RefSeq" id="WP_010891233.1">
    <property type="nucleotide sequence ID" value="NZ_KN150737.1"/>
</dbReference>
<dbReference type="SMR" id="Q01253"/>
<dbReference type="IntAct" id="Q01253">
    <property type="interactions" value="2"/>
</dbReference>
<dbReference type="GO" id="GO:0005829">
    <property type="term" value="C:cytosol"/>
    <property type="evidence" value="ECO:0007669"/>
    <property type="project" value="TreeGrafter"/>
</dbReference>
<dbReference type="GO" id="GO:0030254">
    <property type="term" value="P:protein secretion by the type III secretion system"/>
    <property type="evidence" value="ECO:0007669"/>
    <property type="project" value="InterPro"/>
</dbReference>
<dbReference type="Gene3D" id="1.20.5.2950">
    <property type="match status" value="1"/>
</dbReference>
<dbReference type="InterPro" id="IPR018035">
    <property type="entry name" value="Flagellar_FliH/T3SS_HrpE"/>
</dbReference>
<dbReference type="InterPro" id="IPR012842">
    <property type="entry name" value="T3SS_SctL/SctL2"/>
</dbReference>
<dbReference type="InterPro" id="IPR051472">
    <property type="entry name" value="T3SS_Stator/FliH"/>
</dbReference>
<dbReference type="NCBIfam" id="TIGR02499">
    <property type="entry name" value="HrpE_YscL_not"/>
    <property type="match status" value="1"/>
</dbReference>
<dbReference type="NCBIfam" id="NF005392">
    <property type="entry name" value="PRK06937.1"/>
    <property type="match status" value="1"/>
</dbReference>
<dbReference type="PANTHER" id="PTHR34982:SF4">
    <property type="entry name" value="TYPE 3 SECRETION SYSTEM STATOR PROTEIN"/>
    <property type="match status" value="1"/>
</dbReference>
<dbReference type="PANTHER" id="PTHR34982">
    <property type="entry name" value="YOP PROTEINS TRANSLOCATION PROTEIN L"/>
    <property type="match status" value="1"/>
</dbReference>
<dbReference type="Pfam" id="PF02108">
    <property type="entry name" value="FliH"/>
    <property type="match status" value="1"/>
</dbReference>
<dbReference type="SUPFAM" id="SSF160527">
    <property type="entry name" value="V-type ATPase subunit E-like"/>
    <property type="match status" value="1"/>
</dbReference>
<feature type="chain" id="PRO_0000066492" description="Type 3 secretion system stator protein">
    <location>
        <begin position="1"/>
        <end position="223"/>
    </location>
</feature>
<proteinExistence type="evidence at protein level"/>
<protein>
    <recommendedName>
        <fullName evidence="7">Type 3 secretion system stator protein</fullName>
        <shortName evidence="7">T3SS stator protein</shortName>
    </recommendedName>
    <alternativeName>
        <fullName>Yop proteins translocation protein L</fullName>
    </alternativeName>
</protein>
<accession>Q01253</accession>
<accession>P97147</accession>
<accession>P97148</accession>
<organism>
    <name type="scientific">Yersinia enterocolitica</name>
    <dbReference type="NCBI Taxonomy" id="630"/>
    <lineage>
        <taxon>Bacteria</taxon>
        <taxon>Pseudomonadati</taxon>
        <taxon>Pseudomonadota</taxon>
        <taxon>Gammaproteobacteria</taxon>
        <taxon>Enterobacterales</taxon>
        <taxon>Yersiniaceae</taxon>
        <taxon>Yersinia</taxon>
    </lineage>
</organism>
<evidence type="ECO:0000269" key="1">
    <source>
    </source>
</evidence>
<evidence type="ECO:0000269" key="2">
    <source>
    </source>
</evidence>
<evidence type="ECO:0000269" key="3">
    <source>
    </source>
</evidence>
<evidence type="ECO:0000269" key="4">
    <source>
    </source>
</evidence>
<evidence type="ECO:0000303" key="5">
    <source>
    </source>
</evidence>
<evidence type="ECO:0000303" key="6">
    <source>
    </source>
</evidence>
<evidence type="ECO:0000305" key="7"/>
<evidence type="ECO:0000305" key="8">
    <source>
    </source>
</evidence>
<name>SCTL_YEREN</name>
<sequence>MSQTCQTGYAYMQPFVQIIPSNLSLACGLRILRAEDYQSSLTTEELISAAKQDAEKILADAQEVYEQQKQLGWQAGMDEARTLQATLIHETQLQCQQFYRHVEQQMSEVVLLAVRKILNDYDQVDMTLQVVREALALVSNQKQVVVRVNPDQAGTIREQIAKVHKDFPEISYLEVTADARLDQGGCILETEVGIIDASIDGQIEALSRAISTTLGQMKVTEEE</sequence>
<reference key="1">
    <citation type="journal article" date="1991" name="J. Bacteriol.">
        <title>Analysis of virC, an operon involved in the secretion of Yop proteins by Yersinia enterocolitica.</title>
        <authorList>
            <person name="Michiels T."/>
            <person name="Vanooteghem J.-C."/>
            <person name="de Rouvroit C."/>
            <person name="China B."/>
            <person name="Gustin A."/>
            <person name="Boudry P."/>
            <person name="Cornelis G.R."/>
        </authorList>
    </citation>
    <scope>NUCLEOTIDE SEQUENCE [GENOMIC DNA]</scope>
    <scope>INDUCTION</scope>
    <source>
        <strain>439-80 / Serotype O:9</strain>
    </source>
</reference>
<reference key="2">
    <citation type="journal article" date="1998" name="Microbiol. Mol. Biol. Rev.">
        <title>Type III protein secretion systems in bacterial pathogens of animals and plants.</title>
        <authorList>
            <person name="Hueck C.J."/>
        </authorList>
    </citation>
    <scope>REVIEW</scope>
    <scope>NOMENCLATURE</scope>
</reference>
<reference key="3">
    <citation type="journal article" date="2006" name="J. Bacteriol.">
        <title>Characterization of the Yersinia enterocolitica type III secretion ATPase YscN and its regulator, YscL.</title>
        <authorList>
            <person name="Blaylock B."/>
            <person name="Riordan K.E."/>
            <person name="Missiakas D.M."/>
            <person name="Schneewind O."/>
        </authorList>
    </citation>
    <scope>FUNCTION</scope>
    <scope>SUBUNIT</scope>
    <scope>INTERACTION WITH YSCN/SCTN AND YSCQ/SCTQ</scope>
    <scope>DISRUPTION PHENOTYPE</scope>
    <source>
        <strain>W22703 / Serotype O:9 / Biotype 2</strain>
    </source>
</reference>
<reference key="4">
    <citation type="journal article" date="2010" name="EMBO J.">
        <title>Deciphering the assembly of the Yersinia type III secretion injectisome.</title>
        <authorList>
            <person name="Diepold A."/>
            <person name="Amstutz M."/>
            <person name="Abel S."/>
            <person name="Sorg I."/>
            <person name="Jenal U."/>
            <person name="Cornelis G.R."/>
        </authorList>
    </citation>
    <scope>FUNCTION</scope>
    <scope>SUBUNIT</scope>
    <scope>SUBCELLULAR LOCATION</scope>
</reference>
<reference key="5">
    <citation type="journal article" date="2018" name="FEMS Microbiol. Lett.">
        <title>Bacterial type III secretion systems: a complex device for the delivery of bacterial effector proteins into eukaryotic host cells.</title>
        <authorList>
            <person name="Wagner S."/>
            <person name="Grin I."/>
            <person name="Malmsheimer S."/>
            <person name="Singh N."/>
            <person name="Torres-Vargas C.E."/>
            <person name="Westerhausen S."/>
        </authorList>
    </citation>
    <scope>REVIEW</scope>
    <scope>SUBUNIT</scope>
</reference>
<geneLocation type="plasmid">
    <name>pYV</name>
</geneLocation>
<keyword id="KW-0963">Cytoplasm</keyword>
<keyword id="KW-0614">Plasmid</keyword>
<keyword id="KW-0653">Protein transport</keyword>
<keyword id="KW-0813">Transport</keyword>
<keyword id="KW-0843">Virulence</keyword>
<comment type="function">
    <text evidence="1 3">Component of the type III secretion system (T3SS), also called injectisome, which is used to inject bacterial effector proteins into eukaryotic host cells (PubMed:16672607, PubMed:20453832). Acts as a regulator of the YscN/SctN ATPase activity (PubMed:16672607). Overexpression of YscL/SctL abolishes type III secretion and down-regulates the expression of secretion apparatus components (PubMed:16672607).</text>
</comment>
<comment type="subunit">
    <text evidence="1 3 4">The core secretion machinery of the T3SS is composed of approximately 20 different proteins, including cytoplasmic components, a base, an export apparatus and a needle (PubMed:20453832, PubMed:30107569). This subunit is part of the cytosolic complex (PubMed:20453832). Interacts directly with YscN/SctN (T3SS ATPase) and YscQ/SctQ (the major sorting platform component) (PubMed:16672607). Forms homodimers (PubMed:16672607).</text>
</comment>
<comment type="interaction">
    <interactant intactId="EBI-6502609">
        <id>Q01253</id>
    </interactant>
    <interactant intactId="EBI-6403263">
        <id>Q56844</id>
        <label>yscU</label>
    </interactant>
    <organismsDiffer>true</organismsDiffer>
    <experiments>3</experiments>
</comment>
<comment type="subcellular location">
    <subcellularLocation>
        <location evidence="8">Cytoplasm</location>
    </subcellularLocation>
</comment>
<comment type="induction">
    <text evidence="2">At 37 degrees Celsius in the absence of calcium.</text>
</comment>
<comment type="disruption phenotype">
    <text evidence="1">Deletion mutant does not support type III secretion.</text>
</comment>
<comment type="similarity">
    <text evidence="7">Belongs to the SctL stator family.</text>
</comment>
<comment type="caution">
    <text evidence="7">It is uncertain whether Met-1 or Met-12 is the initiator.</text>
</comment>
<comment type="sequence caution" evidence="7">
    <conflict type="erroneous initiation">
        <sequence resource="EMBL-CDS" id="AAC37030"/>
    </conflict>
</comment>
<comment type="sequence caution" evidence="7">
    <conflict type="erroneous initiation">
        <sequence resource="EMBL-CDS" id="AAC37031"/>
    </conflict>
</comment>